<protein>
    <recommendedName>
        <fullName evidence="1">Triosephosphate isomerase</fullName>
        <shortName evidence="1">TIM</shortName>
        <shortName evidence="1">TPI</shortName>
        <ecNumber evidence="1">5.3.1.1</ecNumber>
    </recommendedName>
    <alternativeName>
        <fullName evidence="1">Triose-phosphate isomerase</fullName>
    </alternativeName>
</protein>
<proteinExistence type="inferred from homology"/>
<feature type="chain" id="PRO_0000307469" description="Triosephosphate isomerase">
    <location>
        <begin position="1"/>
        <end position="253"/>
    </location>
</feature>
<feature type="active site" description="Electrophile" evidence="1">
    <location>
        <position position="93"/>
    </location>
</feature>
<feature type="active site" description="Proton acceptor" evidence="1">
    <location>
        <position position="165"/>
    </location>
</feature>
<feature type="binding site" evidence="1">
    <location>
        <begin position="8"/>
        <end position="10"/>
    </location>
    <ligand>
        <name>substrate</name>
    </ligand>
</feature>
<feature type="binding site" evidence="1">
    <location>
        <position position="171"/>
    </location>
    <ligand>
        <name>substrate</name>
    </ligand>
</feature>
<feature type="binding site" evidence="1">
    <location>
        <position position="210"/>
    </location>
    <ligand>
        <name>substrate</name>
    </ligand>
</feature>
<feature type="binding site" evidence="1">
    <location>
        <begin position="231"/>
        <end position="232"/>
    </location>
    <ligand>
        <name>substrate</name>
    </ligand>
</feature>
<comment type="function">
    <text evidence="1">Involved in the gluconeogenesis. Catalyzes stereospecifically the conversion of dihydroxyacetone phosphate (DHAP) to D-glyceraldehyde-3-phosphate (G3P).</text>
</comment>
<comment type="catalytic activity">
    <reaction evidence="1">
        <text>D-glyceraldehyde 3-phosphate = dihydroxyacetone phosphate</text>
        <dbReference type="Rhea" id="RHEA:18585"/>
        <dbReference type="ChEBI" id="CHEBI:57642"/>
        <dbReference type="ChEBI" id="CHEBI:59776"/>
        <dbReference type="EC" id="5.3.1.1"/>
    </reaction>
</comment>
<comment type="pathway">
    <text evidence="1">Carbohydrate biosynthesis; gluconeogenesis.</text>
</comment>
<comment type="pathway">
    <text evidence="1">Carbohydrate degradation; glycolysis; D-glyceraldehyde 3-phosphate from glycerone phosphate: step 1/1.</text>
</comment>
<comment type="subunit">
    <text evidence="1">Homodimer.</text>
</comment>
<comment type="subcellular location">
    <subcellularLocation>
        <location evidence="1">Cytoplasm</location>
    </subcellularLocation>
</comment>
<comment type="similarity">
    <text evidence="1">Belongs to the triosephosphate isomerase family.</text>
</comment>
<reference key="1">
    <citation type="journal article" date="2007" name="PLoS ONE">
        <title>Genome sequencing shows that European isolates of Francisella tularensis subspecies tularensis are almost identical to US laboratory strain Schu S4.</title>
        <authorList>
            <person name="Chaudhuri R.R."/>
            <person name="Ren C.-P."/>
            <person name="Desmond L."/>
            <person name="Vincent G.A."/>
            <person name="Silman N.J."/>
            <person name="Brehm J.K."/>
            <person name="Elmore M.J."/>
            <person name="Hudson M.J."/>
            <person name="Forsman M."/>
            <person name="Isherwood K.E."/>
            <person name="Gurycova D."/>
            <person name="Minton N.P."/>
            <person name="Titball R.W."/>
            <person name="Pallen M.J."/>
            <person name="Vipond R."/>
        </authorList>
    </citation>
    <scope>NUCLEOTIDE SEQUENCE [LARGE SCALE GENOMIC DNA]</scope>
    <source>
        <strain>FSC 198</strain>
    </source>
</reference>
<gene>
    <name evidence="1" type="primary">tpiA</name>
    <name type="ordered locus">FTF0080</name>
</gene>
<organism>
    <name type="scientific">Francisella tularensis subsp. tularensis (strain FSC 198)</name>
    <dbReference type="NCBI Taxonomy" id="393115"/>
    <lineage>
        <taxon>Bacteria</taxon>
        <taxon>Pseudomonadati</taxon>
        <taxon>Pseudomonadota</taxon>
        <taxon>Gammaproteobacteria</taxon>
        <taxon>Thiotrichales</taxon>
        <taxon>Francisellaceae</taxon>
        <taxon>Francisella</taxon>
    </lineage>
</organism>
<sequence>MQKLIMGNWKMNGNSTSIKELCSGISQVQYDTSRVAIAVFPSSVYVKEVISQLPEKVGVGLQNITFYDDGAYTGEISARMLEDIGCDYLLIGHSERRSLFAESDEDVFKKLNKIIDTTITPVVCIGESLDDRQSGKLKQVLATQLSLILENLSVEQLAKVVIAYEPVWAIGTGVVASLEQIQETHQFIRSLLAKVDERLAKNIKIVYGGSLKAENAKDILSLPDVDGGLIGGASLKAAEFNEIINQANKICTE</sequence>
<evidence type="ECO:0000255" key="1">
    <source>
        <dbReference type="HAMAP-Rule" id="MF_00147"/>
    </source>
</evidence>
<dbReference type="EC" id="5.3.1.1" evidence="1"/>
<dbReference type="EMBL" id="AM286280">
    <property type="protein sequence ID" value="CAL08096.1"/>
    <property type="molecule type" value="Genomic_DNA"/>
</dbReference>
<dbReference type="RefSeq" id="WP_003019651.1">
    <property type="nucleotide sequence ID" value="NC_008245.1"/>
</dbReference>
<dbReference type="SMR" id="Q14JZ0"/>
<dbReference type="GeneID" id="75264638"/>
<dbReference type="KEGG" id="ftf:FTF0080"/>
<dbReference type="HOGENOM" id="CLU_024251_2_1_6"/>
<dbReference type="UniPathway" id="UPA00109">
    <property type="reaction ID" value="UER00189"/>
</dbReference>
<dbReference type="UniPathway" id="UPA00138"/>
<dbReference type="GO" id="GO:0005829">
    <property type="term" value="C:cytosol"/>
    <property type="evidence" value="ECO:0007669"/>
    <property type="project" value="TreeGrafter"/>
</dbReference>
<dbReference type="GO" id="GO:0004807">
    <property type="term" value="F:triose-phosphate isomerase activity"/>
    <property type="evidence" value="ECO:0007669"/>
    <property type="project" value="UniProtKB-UniRule"/>
</dbReference>
<dbReference type="GO" id="GO:0006094">
    <property type="term" value="P:gluconeogenesis"/>
    <property type="evidence" value="ECO:0007669"/>
    <property type="project" value="UniProtKB-UniRule"/>
</dbReference>
<dbReference type="GO" id="GO:0046166">
    <property type="term" value="P:glyceraldehyde-3-phosphate biosynthetic process"/>
    <property type="evidence" value="ECO:0007669"/>
    <property type="project" value="TreeGrafter"/>
</dbReference>
<dbReference type="GO" id="GO:0019563">
    <property type="term" value="P:glycerol catabolic process"/>
    <property type="evidence" value="ECO:0007669"/>
    <property type="project" value="TreeGrafter"/>
</dbReference>
<dbReference type="GO" id="GO:0006096">
    <property type="term" value="P:glycolytic process"/>
    <property type="evidence" value="ECO:0007669"/>
    <property type="project" value="UniProtKB-UniRule"/>
</dbReference>
<dbReference type="CDD" id="cd00311">
    <property type="entry name" value="TIM"/>
    <property type="match status" value="1"/>
</dbReference>
<dbReference type="FunFam" id="3.20.20.70:FF:000016">
    <property type="entry name" value="Triosephosphate isomerase"/>
    <property type="match status" value="1"/>
</dbReference>
<dbReference type="Gene3D" id="3.20.20.70">
    <property type="entry name" value="Aldolase class I"/>
    <property type="match status" value="1"/>
</dbReference>
<dbReference type="HAMAP" id="MF_00147_B">
    <property type="entry name" value="TIM_B"/>
    <property type="match status" value="1"/>
</dbReference>
<dbReference type="InterPro" id="IPR013785">
    <property type="entry name" value="Aldolase_TIM"/>
</dbReference>
<dbReference type="InterPro" id="IPR035990">
    <property type="entry name" value="TIM_sf"/>
</dbReference>
<dbReference type="InterPro" id="IPR022896">
    <property type="entry name" value="TrioseP_Isoase_bac/euk"/>
</dbReference>
<dbReference type="InterPro" id="IPR000652">
    <property type="entry name" value="Triosephosphate_isomerase"/>
</dbReference>
<dbReference type="InterPro" id="IPR020861">
    <property type="entry name" value="Triosephosphate_isomerase_AS"/>
</dbReference>
<dbReference type="NCBIfam" id="TIGR00419">
    <property type="entry name" value="tim"/>
    <property type="match status" value="1"/>
</dbReference>
<dbReference type="PANTHER" id="PTHR21139">
    <property type="entry name" value="TRIOSEPHOSPHATE ISOMERASE"/>
    <property type="match status" value="1"/>
</dbReference>
<dbReference type="PANTHER" id="PTHR21139:SF42">
    <property type="entry name" value="TRIOSEPHOSPHATE ISOMERASE"/>
    <property type="match status" value="1"/>
</dbReference>
<dbReference type="Pfam" id="PF00121">
    <property type="entry name" value="TIM"/>
    <property type="match status" value="1"/>
</dbReference>
<dbReference type="SUPFAM" id="SSF51351">
    <property type="entry name" value="Triosephosphate isomerase (TIM)"/>
    <property type="match status" value="1"/>
</dbReference>
<dbReference type="PROSITE" id="PS00171">
    <property type="entry name" value="TIM_1"/>
    <property type="match status" value="1"/>
</dbReference>
<dbReference type="PROSITE" id="PS51440">
    <property type="entry name" value="TIM_2"/>
    <property type="match status" value="1"/>
</dbReference>
<name>TPIS_FRAT1</name>
<keyword id="KW-0963">Cytoplasm</keyword>
<keyword id="KW-0312">Gluconeogenesis</keyword>
<keyword id="KW-0324">Glycolysis</keyword>
<keyword id="KW-0413">Isomerase</keyword>
<accession>Q14JZ0</accession>